<keyword id="KW-0067">ATP-binding</keyword>
<keyword id="KW-0963">Cytoplasm</keyword>
<keyword id="KW-0275">Fatty acid biosynthesis</keyword>
<keyword id="KW-0276">Fatty acid metabolism</keyword>
<keyword id="KW-0444">Lipid biosynthesis</keyword>
<keyword id="KW-0443">Lipid metabolism</keyword>
<keyword id="KW-0479">Metal-binding</keyword>
<keyword id="KW-0547">Nucleotide-binding</keyword>
<keyword id="KW-1185">Reference proteome</keyword>
<keyword id="KW-0808">Transferase</keyword>
<keyword id="KW-0862">Zinc</keyword>
<keyword id="KW-0863">Zinc-finger</keyword>
<dbReference type="EC" id="2.1.3.15" evidence="1"/>
<dbReference type="EMBL" id="CP000576">
    <property type="protein sequence ID" value="ABO17468.1"/>
    <property type="molecule type" value="Genomic_DNA"/>
</dbReference>
<dbReference type="RefSeq" id="WP_011862820.1">
    <property type="nucleotide sequence ID" value="NC_009091.1"/>
</dbReference>
<dbReference type="SMR" id="A3PCJ3"/>
<dbReference type="STRING" id="167546.P9301_08451"/>
<dbReference type="KEGG" id="pmg:P9301_08451"/>
<dbReference type="eggNOG" id="COG0777">
    <property type="taxonomic scope" value="Bacteria"/>
</dbReference>
<dbReference type="HOGENOM" id="CLU_015486_1_1_3"/>
<dbReference type="OrthoDB" id="9772975at2"/>
<dbReference type="UniPathway" id="UPA00655">
    <property type="reaction ID" value="UER00711"/>
</dbReference>
<dbReference type="Proteomes" id="UP000001430">
    <property type="component" value="Chromosome"/>
</dbReference>
<dbReference type="GO" id="GO:0009317">
    <property type="term" value="C:acetyl-CoA carboxylase complex"/>
    <property type="evidence" value="ECO:0007669"/>
    <property type="project" value="InterPro"/>
</dbReference>
<dbReference type="GO" id="GO:0003989">
    <property type="term" value="F:acetyl-CoA carboxylase activity"/>
    <property type="evidence" value="ECO:0007669"/>
    <property type="project" value="InterPro"/>
</dbReference>
<dbReference type="GO" id="GO:0005524">
    <property type="term" value="F:ATP binding"/>
    <property type="evidence" value="ECO:0007669"/>
    <property type="project" value="UniProtKB-KW"/>
</dbReference>
<dbReference type="GO" id="GO:0016743">
    <property type="term" value="F:carboxyl- or carbamoyltransferase activity"/>
    <property type="evidence" value="ECO:0007669"/>
    <property type="project" value="UniProtKB-UniRule"/>
</dbReference>
<dbReference type="GO" id="GO:0008270">
    <property type="term" value="F:zinc ion binding"/>
    <property type="evidence" value="ECO:0007669"/>
    <property type="project" value="UniProtKB-UniRule"/>
</dbReference>
<dbReference type="GO" id="GO:0006633">
    <property type="term" value="P:fatty acid biosynthetic process"/>
    <property type="evidence" value="ECO:0007669"/>
    <property type="project" value="UniProtKB-KW"/>
</dbReference>
<dbReference type="GO" id="GO:2001295">
    <property type="term" value="P:malonyl-CoA biosynthetic process"/>
    <property type="evidence" value="ECO:0007669"/>
    <property type="project" value="UniProtKB-UniRule"/>
</dbReference>
<dbReference type="Gene3D" id="3.90.226.10">
    <property type="entry name" value="2-enoyl-CoA Hydratase, Chain A, domain 1"/>
    <property type="match status" value="1"/>
</dbReference>
<dbReference type="HAMAP" id="MF_01395">
    <property type="entry name" value="AcetylCoA_CT_beta"/>
    <property type="match status" value="1"/>
</dbReference>
<dbReference type="InterPro" id="IPR034733">
    <property type="entry name" value="AcCoA_carboxyl_beta"/>
</dbReference>
<dbReference type="InterPro" id="IPR000438">
    <property type="entry name" value="Acetyl_CoA_COase_Trfase_b_su"/>
</dbReference>
<dbReference type="InterPro" id="IPR029045">
    <property type="entry name" value="ClpP/crotonase-like_dom_sf"/>
</dbReference>
<dbReference type="InterPro" id="IPR011762">
    <property type="entry name" value="COA_CT_N"/>
</dbReference>
<dbReference type="InterPro" id="IPR041010">
    <property type="entry name" value="Znf-ACC"/>
</dbReference>
<dbReference type="NCBIfam" id="TIGR00515">
    <property type="entry name" value="accD"/>
    <property type="match status" value="1"/>
</dbReference>
<dbReference type="PANTHER" id="PTHR42995">
    <property type="entry name" value="ACETYL-COENZYME A CARBOXYLASE CARBOXYL TRANSFERASE SUBUNIT BETA, CHLOROPLASTIC"/>
    <property type="match status" value="1"/>
</dbReference>
<dbReference type="PANTHER" id="PTHR42995:SF5">
    <property type="entry name" value="ACETYL-COENZYME A CARBOXYLASE CARBOXYL TRANSFERASE SUBUNIT BETA, CHLOROPLASTIC"/>
    <property type="match status" value="1"/>
</dbReference>
<dbReference type="Pfam" id="PF01039">
    <property type="entry name" value="Carboxyl_trans"/>
    <property type="match status" value="1"/>
</dbReference>
<dbReference type="Pfam" id="PF17848">
    <property type="entry name" value="Zn_ribbon_ACC"/>
    <property type="match status" value="1"/>
</dbReference>
<dbReference type="PRINTS" id="PR01070">
    <property type="entry name" value="ACCCTRFRASEB"/>
</dbReference>
<dbReference type="SUPFAM" id="SSF52096">
    <property type="entry name" value="ClpP/crotonase"/>
    <property type="match status" value="1"/>
</dbReference>
<dbReference type="PROSITE" id="PS50980">
    <property type="entry name" value="COA_CT_NTER"/>
    <property type="match status" value="1"/>
</dbReference>
<reference key="1">
    <citation type="journal article" date="2007" name="PLoS Genet.">
        <title>Patterns and implications of gene gain and loss in the evolution of Prochlorococcus.</title>
        <authorList>
            <person name="Kettler G.C."/>
            <person name="Martiny A.C."/>
            <person name="Huang K."/>
            <person name="Zucker J."/>
            <person name="Coleman M.L."/>
            <person name="Rodrigue S."/>
            <person name="Chen F."/>
            <person name="Lapidus A."/>
            <person name="Ferriera S."/>
            <person name="Johnson J."/>
            <person name="Steglich C."/>
            <person name="Church G.M."/>
            <person name="Richardson P."/>
            <person name="Chisholm S.W."/>
        </authorList>
    </citation>
    <scope>NUCLEOTIDE SEQUENCE [LARGE SCALE GENOMIC DNA]</scope>
    <source>
        <strain>MIT 9301</strain>
    </source>
</reference>
<accession>A3PCJ3</accession>
<organism>
    <name type="scientific">Prochlorococcus marinus (strain MIT 9301)</name>
    <dbReference type="NCBI Taxonomy" id="167546"/>
    <lineage>
        <taxon>Bacteria</taxon>
        <taxon>Bacillati</taxon>
        <taxon>Cyanobacteriota</taxon>
        <taxon>Cyanophyceae</taxon>
        <taxon>Synechococcales</taxon>
        <taxon>Prochlorococcaceae</taxon>
        <taxon>Prochlorococcus</taxon>
    </lineage>
</organism>
<comment type="function">
    <text evidence="1">Component of the acetyl coenzyme A carboxylase (ACC) complex. Biotin carboxylase (BC) catalyzes the carboxylation of biotin on its carrier protein (BCCP) and then the CO(2) group is transferred by the transcarboxylase to acetyl-CoA to form malonyl-CoA.</text>
</comment>
<comment type="catalytic activity">
    <reaction evidence="1">
        <text>N(6)-carboxybiotinyl-L-lysyl-[protein] + acetyl-CoA = N(6)-biotinyl-L-lysyl-[protein] + malonyl-CoA</text>
        <dbReference type="Rhea" id="RHEA:54728"/>
        <dbReference type="Rhea" id="RHEA-COMP:10505"/>
        <dbReference type="Rhea" id="RHEA-COMP:10506"/>
        <dbReference type="ChEBI" id="CHEBI:57288"/>
        <dbReference type="ChEBI" id="CHEBI:57384"/>
        <dbReference type="ChEBI" id="CHEBI:83144"/>
        <dbReference type="ChEBI" id="CHEBI:83145"/>
        <dbReference type="EC" id="2.1.3.15"/>
    </reaction>
</comment>
<comment type="cofactor">
    <cofactor evidence="1">
        <name>Zn(2+)</name>
        <dbReference type="ChEBI" id="CHEBI:29105"/>
    </cofactor>
    <text evidence="1">Binds 1 zinc ion per subunit.</text>
</comment>
<comment type="pathway">
    <text evidence="1">Lipid metabolism; malonyl-CoA biosynthesis; malonyl-CoA from acetyl-CoA: step 1/1.</text>
</comment>
<comment type="subunit">
    <text evidence="1">Acetyl-CoA carboxylase is a heterohexamer composed of biotin carboxyl carrier protein (AccB), biotin carboxylase (AccC) and two subunits each of ACCase subunit alpha (AccA) and ACCase subunit beta (AccD).</text>
</comment>
<comment type="subcellular location">
    <subcellularLocation>
        <location evidence="1">Cytoplasm</location>
    </subcellularLocation>
</comment>
<comment type="similarity">
    <text evidence="1">Belongs to the AccD/PCCB family.</text>
</comment>
<protein>
    <recommendedName>
        <fullName evidence="1">Acetyl-coenzyme A carboxylase carboxyl transferase subunit beta</fullName>
        <shortName evidence="1">ACCase subunit beta</shortName>
        <shortName evidence="1">Acetyl-CoA carboxylase carboxyltransferase subunit beta</shortName>
        <ecNumber evidence="1">2.1.3.15</ecNumber>
    </recommendedName>
</protein>
<sequence length="293" mass="32358">MSLIDWFAARRKDQFVGKVSQDADEGDGLWVKCSECSQVAYRKDLISNFNVCSNCGHHNRINSDERINIIADKNSFEEFDSLLSPTDPLGFKDRRSYADRIKESQAGTGLRDGVVTGICSVNSMPLALAVMDFRFMGGSMGSVVGEKITRIIERATLENFPILIVCASGGARMQEGMLSLMQMAKISGALKKHKEKNLLYMPLLTHPTTGGVTASFAMLGDLILAEPKALIGFAGRRVIEQTLREKLPDNFQTAEYLLEHGFVDVIVKRKDLKTTLAKILKIHGVKELAEANT</sequence>
<feature type="chain" id="PRO_0000359021" description="Acetyl-coenzyme A carboxylase carboxyl transferase subunit beta">
    <location>
        <begin position="1"/>
        <end position="293"/>
    </location>
</feature>
<feature type="domain" description="CoA carboxyltransferase N-terminal" evidence="2">
    <location>
        <begin position="29"/>
        <end position="293"/>
    </location>
</feature>
<feature type="zinc finger region" description="C4-type" evidence="1">
    <location>
        <begin position="33"/>
        <end position="55"/>
    </location>
</feature>
<feature type="binding site" evidence="1">
    <location>
        <position position="33"/>
    </location>
    <ligand>
        <name>Zn(2+)</name>
        <dbReference type="ChEBI" id="CHEBI:29105"/>
    </ligand>
</feature>
<feature type="binding site" evidence="1">
    <location>
        <position position="36"/>
    </location>
    <ligand>
        <name>Zn(2+)</name>
        <dbReference type="ChEBI" id="CHEBI:29105"/>
    </ligand>
</feature>
<feature type="binding site" evidence="1">
    <location>
        <position position="52"/>
    </location>
    <ligand>
        <name>Zn(2+)</name>
        <dbReference type="ChEBI" id="CHEBI:29105"/>
    </ligand>
</feature>
<feature type="binding site" evidence="1">
    <location>
        <position position="55"/>
    </location>
    <ligand>
        <name>Zn(2+)</name>
        <dbReference type="ChEBI" id="CHEBI:29105"/>
    </ligand>
</feature>
<name>ACCD_PROM0</name>
<proteinExistence type="inferred from homology"/>
<gene>
    <name evidence="1" type="primary">accD</name>
    <name type="ordered locus">P9301_08451</name>
</gene>
<evidence type="ECO:0000255" key="1">
    <source>
        <dbReference type="HAMAP-Rule" id="MF_01395"/>
    </source>
</evidence>
<evidence type="ECO:0000255" key="2">
    <source>
        <dbReference type="PROSITE-ProRule" id="PRU01136"/>
    </source>
</evidence>